<reference key="1">
    <citation type="submission" date="2007-04" db="EMBL/GenBank/DDBJ databases">
        <title>Complete sequence of Shewanella putrefaciens CN-32.</title>
        <authorList>
            <consortium name="US DOE Joint Genome Institute"/>
            <person name="Copeland A."/>
            <person name="Lucas S."/>
            <person name="Lapidus A."/>
            <person name="Barry K."/>
            <person name="Detter J.C."/>
            <person name="Glavina del Rio T."/>
            <person name="Hammon N."/>
            <person name="Israni S."/>
            <person name="Dalin E."/>
            <person name="Tice H."/>
            <person name="Pitluck S."/>
            <person name="Chain P."/>
            <person name="Malfatti S."/>
            <person name="Shin M."/>
            <person name="Vergez L."/>
            <person name="Schmutz J."/>
            <person name="Larimer F."/>
            <person name="Land M."/>
            <person name="Hauser L."/>
            <person name="Kyrpides N."/>
            <person name="Mikhailova N."/>
            <person name="Romine M.F."/>
            <person name="Fredrickson J."/>
            <person name="Tiedje J."/>
            <person name="Richardson P."/>
        </authorList>
    </citation>
    <scope>NUCLEOTIDE SEQUENCE [LARGE SCALE GENOMIC DNA]</scope>
    <source>
        <strain>CN-32 / ATCC BAA-453</strain>
    </source>
</reference>
<accession>A4Y8U3</accession>
<evidence type="ECO:0000255" key="1">
    <source>
        <dbReference type="HAMAP-Rule" id="MF_01849"/>
    </source>
</evidence>
<evidence type="ECO:0000255" key="2">
    <source>
        <dbReference type="PROSITE-ProRule" id="PRU01266"/>
    </source>
</evidence>
<sequence>MSEKKINLLDLDRKAMRALFADLGEKPFRADQLMKWIYHFGVSDFEEMTNINKVLRQKLAARCEIVAPEISSFQKSTDGTIKFAIHVGEGQEVETVYIPEDDRATLCVSSQVGCALECTFCSTAQQGFNRNLTVSEIVGQIWRVSHFLGFAKDTGDRPITNVVMMGMGEPLLNLANVIPAMDIMLDDFGFSLSKRRVTLSTSGVVPALDKLGDALDVALAVSIHAPNDELRDILVPVNKKYPLQEFLAGIRRYIAKSNANRGRVTVEYVMLDHINDSTEQAHELAKLMEDTPCKVNLIPFNPYPGSPYGRSSNSRIDRFSKVLMEYGLTVIVRKTRGDDIDAACGQLAGDIRDRTKRLAKKRMQENQISVTMN</sequence>
<organism>
    <name type="scientific">Shewanella putrefaciens (strain CN-32 / ATCC BAA-453)</name>
    <dbReference type="NCBI Taxonomy" id="319224"/>
    <lineage>
        <taxon>Bacteria</taxon>
        <taxon>Pseudomonadati</taxon>
        <taxon>Pseudomonadota</taxon>
        <taxon>Gammaproteobacteria</taxon>
        <taxon>Alteromonadales</taxon>
        <taxon>Shewanellaceae</taxon>
        <taxon>Shewanella</taxon>
    </lineage>
</organism>
<gene>
    <name evidence="1" type="primary">rlmN</name>
    <name type="ordered locus">Sputcn32_2655</name>
</gene>
<feature type="chain" id="PRO_0000350402" description="Dual-specificity RNA methyltransferase RlmN">
    <location>
        <begin position="1"/>
        <end position="373"/>
    </location>
</feature>
<feature type="domain" description="Radical SAM core" evidence="2">
    <location>
        <begin position="100"/>
        <end position="339"/>
    </location>
</feature>
<feature type="active site" description="Proton acceptor" evidence="1">
    <location>
        <position position="94"/>
    </location>
</feature>
<feature type="active site" description="S-methylcysteine intermediate" evidence="1">
    <location>
        <position position="344"/>
    </location>
</feature>
<feature type="binding site" evidence="1">
    <location>
        <position position="114"/>
    </location>
    <ligand>
        <name>[4Fe-4S] cluster</name>
        <dbReference type="ChEBI" id="CHEBI:49883"/>
        <note>4Fe-4S-S-AdoMet</note>
    </ligand>
</feature>
<feature type="binding site" evidence="1">
    <location>
        <position position="118"/>
    </location>
    <ligand>
        <name>[4Fe-4S] cluster</name>
        <dbReference type="ChEBI" id="CHEBI:49883"/>
        <note>4Fe-4S-S-AdoMet</note>
    </ligand>
</feature>
<feature type="binding site" evidence="1">
    <location>
        <position position="121"/>
    </location>
    <ligand>
        <name>[4Fe-4S] cluster</name>
        <dbReference type="ChEBI" id="CHEBI:49883"/>
        <note>4Fe-4S-S-AdoMet</note>
    </ligand>
</feature>
<feature type="binding site" evidence="1">
    <location>
        <begin position="168"/>
        <end position="169"/>
    </location>
    <ligand>
        <name>S-adenosyl-L-methionine</name>
        <dbReference type="ChEBI" id="CHEBI:59789"/>
    </ligand>
</feature>
<feature type="binding site" evidence="1">
    <location>
        <position position="200"/>
    </location>
    <ligand>
        <name>S-adenosyl-L-methionine</name>
        <dbReference type="ChEBI" id="CHEBI:59789"/>
    </ligand>
</feature>
<feature type="binding site" evidence="1">
    <location>
        <begin position="222"/>
        <end position="224"/>
    </location>
    <ligand>
        <name>S-adenosyl-L-methionine</name>
        <dbReference type="ChEBI" id="CHEBI:59789"/>
    </ligand>
</feature>
<feature type="binding site" evidence="1">
    <location>
        <position position="301"/>
    </location>
    <ligand>
        <name>S-adenosyl-L-methionine</name>
        <dbReference type="ChEBI" id="CHEBI:59789"/>
    </ligand>
</feature>
<feature type="disulfide bond" description="(transient)" evidence="1">
    <location>
        <begin position="107"/>
        <end position="344"/>
    </location>
</feature>
<name>RLMN_SHEPC</name>
<comment type="function">
    <text evidence="1">Specifically methylates position 2 of adenine 2503 in 23S rRNA and position 2 of adenine 37 in tRNAs. m2A2503 modification seems to play a crucial role in the proofreading step occurring at the peptidyl transferase center and thus would serve to optimize ribosomal fidelity.</text>
</comment>
<comment type="catalytic activity">
    <reaction evidence="1">
        <text>adenosine(2503) in 23S rRNA + 2 reduced [2Fe-2S]-[ferredoxin] + 2 S-adenosyl-L-methionine = 2-methyladenosine(2503) in 23S rRNA + 5'-deoxyadenosine + L-methionine + 2 oxidized [2Fe-2S]-[ferredoxin] + S-adenosyl-L-homocysteine</text>
        <dbReference type="Rhea" id="RHEA:42916"/>
        <dbReference type="Rhea" id="RHEA-COMP:10000"/>
        <dbReference type="Rhea" id="RHEA-COMP:10001"/>
        <dbReference type="Rhea" id="RHEA-COMP:10152"/>
        <dbReference type="Rhea" id="RHEA-COMP:10282"/>
        <dbReference type="ChEBI" id="CHEBI:17319"/>
        <dbReference type="ChEBI" id="CHEBI:33737"/>
        <dbReference type="ChEBI" id="CHEBI:33738"/>
        <dbReference type="ChEBI" id="CHEBI:57844"/>
        <dbReference type="ChEBI" id="CHEBI:57856"/>
        <dbReference type="ChEBI" id="CHEBI:59789"/>
        <dbReference type="ChEBI" id="CHEBI:74411"/>
        <dbReference type="ChEBI" id="CHEBI:74497"/>
        <dbReference type="EC" id="2.1.1.192"/>
    </reaction>
</comment>
<comment type="catalytic activity">
    <reaction evidence="1">
        <text>adenosine(37) in tRNA + 2 reduced [2Fe-2S]-[ferredoxin] + 2 S-adenosyl-L-methionine = 2-methyladenosine(37) in tRNA + 5'-deoxyadenosine + L-methionine + 2 oxidized [2Fe-2S]-[ferredoxin] + S-adenosyl-L-homocysteine</text>
        <dbReference type="Rhea" id="RHEA:43332"/>
        <dbReference type="Rhea" id="RHEA-COMP:10000"/>
        <dbReference type="Rhea" id="RHEA-COMP:10001"/>
        <dbReference type="Rhea" id="RHEA-COMP:10162"/>
        <dbReference type="Rhea" id="RHEA-COMP:10485"/>
        <dbReference type="ChEBI" id="CHEBI:17319"/>
        <dbReference type="ChEBI" id="CHEBI:33737"/>
        <dbReference type="ChEBI" id="CHEBI:33738"/>
        <dbReference type="ChEBI" id="CHEBI:57844"/>
        <dbReference type="ChEBI" id="CHEBI:57856"/>
        <dbReference type="ChEBI" id="CHEBI:59789"/>
        <dbReference type="ChEBI" id="CHEBI:74411"/>
        <dbReference type="ChEBI" id="CHEBI:74497"/>
        <dbReference type="EC" id="2.1.1.192"/>
    </reaction>
</comment>
<comment type="cofactor">
    <cofactor evidence="1">
        <name>[4Fe-4S] cluster</name>
        <dbReference type="ChEBI" id="CHEBI:49883"/>
    </cofactor>
    <text evidence="1">Binds 1 [4Fe-4S] cluster. The cluster is coordinated with 3 cysteines and an exchangeable S-adenosyl-L-methionine.</text>
</comment>
<comment type="subcellular location">
    <subcellularLocation>
        <location evidence="1">Cytoplasm</location>
    </subcellularLocation>
</comment>
<comment type="miscellaneous">
    <text evidence="1">Reaction proceeds by a ping-pong mechanism involving intermediate methylation of a conserved cysteine residue.</text>
</comment>
<comment type="similarity">
    <text evidence="1">Belongs to the radical SAM superfamily. RlmN family.</text>
</comment>
<dbReference type="EC" id="2.1.1.192" evidence="1"/>
<dbReference type="EMBL" id="CP000681">
    <property type="protein sequence ID" value="ABP76376.1"/>
    <property type="molecule type" value="Genomic_DNA"/>
</dbReference>
<dbReference type="SMR" id="A4Y8U3"/>
<dbReference type="STRING" id="319224.Sputcn32_2655"/>
<dbReference type="KEGG" id="spc:Sputcn32_2655"/>
<dbReference type="eggNOG" id="COG0820">
    <property type="taxonomic scope" value="Bacteria"/>
</dbReference>
<dbReference type="HOGENOM" id="CLU_029101_2_0_6"/>
<dbReference type="GO" id="GO:0005737">
    <property type="term" value="C:cytoplasm"/>
    <property type="evidence" value="ECO:0007669"/>
    <property type="project" value="UniProtKB-SubCell"/>
</dbReference>
<dbReference type="GO" id="GO:0051539">
    <property type="term" value="F:4 iron, 4 sulfur cluster binding"/>
    <property type="evidence" value="ECO:0007669"/>
    <property type="project" value="UniProtKB-UniRule"/>
</dbReference>
<dbReference type="GO" id="GO:0046872">
    <property type="term" value="F:metal ion binding"/>
    <property type="evidence" value="ECO:0007669"/>
    <property type="project" value="UniProtKB-KW"/>
</dbReference>
<dbReference type="GO" id="GO:0070040">
    <property type="term" value="F:rRNA (adenine(2503)-C2-)-methyltransferase activity"/>
    <property type="evidence" value="ECO:0007669"/>
    <property type="project" value="UniProtKB-UniRule"/>
</dbReference>
<dbReference type="GO" id="GO:0019843">
    <property type="term" value="F:rRNA binding"/>
    <property type="evidence" value="ECO:0007669"/>
    <property type="project" value="UniProtKB-UniRule"/>
</dbReference>
<dbReference type="GO" id="GO:0002935">
    <property type="term" value="F:tRNA (adenine(37)-C2)-methyltransferase activity"/>
    <property type="evidence" value="ECO:0007669"/>
    <property type="project" value="UniProtKB-UniRule"/>
</dbReference>
<dbReference type="GO" id="GO:0000049">
    <property type="term" value="F:tRNA binding"/>
    <property type="evidence" value="ECO:0007669"/>
    <property type="project" value="UniProtKB-UniRule"/>
</dbReference>
<dbReference type="GO" id="GO:0070475">
    <property type="term" value="P:rRNA base methylation"/>
    <property type="evidence" value="ECO:0007669"/>
    <property type="project" value="UniProtKB-UniRule"/>
</dbReference>
<dbReference type="GO" id="GO:0030488">
    <property type="term" value="P:tRNA methylation"/>
    <property type="evidence" value="ECO:0007669"/>
    <property type="project" value="UniProtKB-UniRule"/>
</dbReference>
<dbReference type="CDD" id="cd01335">
    <property type="entry name" value="Radical_SAM"/>
    <property type="match status" value="1"/>
</dbReference>
<dbReference type="FunFam" id="1.10.150.530:FF:000003">
    <property type="entry name" value="Dual-specificity RNA methyltransferase RlmN"/>
    <property type="match status" value="1"/>
</dbReference>
<dbReference type="FunFam" id="3.20.20.70:FF:000008">
    <property type="entry name" value="Dual-specificity RNA methyltransferase RlmN"/>
    <property type="match status" value="1"/>
</dbReference>
<dbReference type="Gene3D" id="1.10.150.530">
    <property type="match status" value="1"/>
</dbReference>
<dbReference type="Gene3D" id="3.20.20.70">
    <property type="entry name" value="Aldolase class I"/>
    <property type="match status" value="1"/>
</dbReference>
<dbReference type="HAMAP" id="MF_01849">
    <property type="entry name" value="RNA_methyltr_RlmN"/>
    <property type="match status" value="1"/>
</dbReference>
<dbReference type="InterPro" id="IPR013785">
    <property type="entry name" value="Aldolase_TIM"/>
</dbReference>
<dbReference type="InterPro" id="IPR040072">
    <property type="entry name" value="Methyltransferase_A"/>
</dbReference>
<dbReference type="InterPro" id="IPR048641">
    <property type="entry name" value="RlmN_N"/>
</dbReference>
<dbReference type="InterPro" id="IPR027492">
    <property type="entry name" value="RNA_MTrfase_RlmN"/>
</dbReference>
<dbReference type="InterPro" id="IPR004383">
    <property type="entry name" value="rRNA_lsu_MTrfase_RlmN/Cfr"/>
</dbReference>
<dbReference type="InterPro" id="IPR007197">
    <property type="entry name" value="rSAM"/>
</dbReference>
<dbReference type="NCBIfam" id="NF008396">
    <property type="entry name" value="PRK11194.1"/>
    <property type="match status" value="1"/>
</dbReference>
<dbReference type="NCBIfam" id="TIGR00048">
    <property type="entry name" value="rRNA_mod_RlmN"/>
    <property type="match status" value="1"/>
</dbReference>
<dbReference type="PANTHER" id="PTHR30544">
    <property type="entry name" value="23S RRNA METHYLTRANSFERASE"/>
    <property type="match status" value="1"/>
</dbReference>
<dbReference type="PANTHER" id="PTHR30544:SF5">
    <property type="entry name" value="RADICAL SAM CORE DOMAIN-CONTAINING PROTEIN"/>
    <property type="match status" value="1"/>
</dbReference>
<dbReference type="Pfam" id="PF04055">
    <property type="entry name" value="Radical_SAM"/>
    <property type="match status" value="1"/>
</dbReference>
<dbReference type="Pfam" id="PF21016">
    <property type="entry name" value="RlmN_N"/>
    <property type="match status" value="1"/>
</dbReference>
<dbReference type="PIRSF" id="PIRSF006004">
    <property type="entry name" value="CHP00048"/>
    <property type="match status" value="1"/>
</dbReference>
<dbReference type="SFLD" id="SFLDF00275">
    <property type="entry name" value="adenosine_C2_methyltransferase"/>
    <property type="match status" value="1"/>
</dbReference>
<dbReference type="SFLD" id="SFLDG01062">
    <property type="entry name" value="methyltransferase_(Class_A)"/>
    <property type="match status" value="1"/>
</dbReference>
<dbReference type="SUPFAM" id="SSF102114">
    <property type="entry name" value="Radical SAM enzymes"/>
    <property type="match status" value="1"/>
</dbReference>
<dbReference type="PROSITE" id="PS51918">
    <property type="entry name" value="RADICAL_SAM"/>
    <property type="match status" value="1"/>
</dbReference>
<proteinExistence type="inferred from homology"/>
<keyword id="KW-0004">4Fe-4S</keyword>
<keyword id="KW-0963">Cytoplasm</keyword>
<keyword id="KW-1015">Disulfide bond</keyword>
<keyword id="KW-0408">Iron</keyword>
<keyword id="KW-0411">Iron-sulfur</keyword>
<keyword id="KW-0479">Metal-binding</keyword>
<keyword id="KW-0489">Methyltransferase</keyword>
<keyword id="KW-0698">rRNA processing</keyword>
<keyword id="KW-0949">S-adenosyl-L-methionine</keyword>
<keyword id="KW-0808">Transferase</keyword>
<keyword id="KW-0819">tRNA processing</keyword>
<protein>
    <recommendedName>
        <fullName evidence="1">Dual-specificity RNA methyltransferase RlmN</fullName>
        <ecNumber evidence="1">2.1.1.192</ecNumber>
    </recommendedName>
    <alternativeName>
        <fullName evidence="1">23S rRNA (adenine(2503)-C(2))-methyltransferase</fullName>
    </alternativeName>
    <alternativeName>
        <fullName evidence="1">23S rRNA m2A2503 methyltransferase</fullName>
    </alternativeName>
    <alternativeName>
        <fullName evidence="1">Ribosomal RNA large subunit methyltransferase N</fullName>
    </alternativeName>
    <alternativeName>
        <fullName evidence="1">tRNA (adenine(37)-C(2))-methyltransferase</fullName>
    </alternativeName>
    <alternativeName>
        <fullName evidence="1">tRNA m2A37 methyltransferase</fullName>
    </alternativeName>
</protein>